<feature type="chain" id="PRO_0000344227" description="Ribonuclease kappa-B">
    <location>
        <begin position="1"/>
        <end position="95"/>
    </location>
</feature>
<feature type="transmembrane region" description="Helical" evidence="1">
    <location>
        <begin position="12"/>
        <end position="32"/>
    </location>
</feature>
<feature type="transmembrane region" description="Helical" evidence="1">
    <location>
        <begin position="68"/>
        <end position="88"/>
    </location>
</feature>
<protein>
    <recommendedName>
        <fullName>Ribonuclease kappa-B</fullName>
        <shortName>RNase K-B</shortName>
        <shortName>RNase kappa-B</shortName>
        <ecNumber>3.1.-.-</ecNumber>
    </recommendedName>
    <alternativeName>
        <fullName>Cc RNase</fullName>
    </alternativeName>
</protein>
<dbReference type="EC" id="3.1.-.-"/>
<dbReference type="EMBL" id="AJ441124">
    <property type="protein sequence ID" value="CAD29629.1"/>
    <property type="molecule type" value="mRNA"/>
</dbReference>
<dbReference type="EMBL" id="AJ874688">
    <property type="protein sequence ID" value="CAI44684.1"/>
    <property type="molecule type" value="Genomic_DNA"/>
</dbReference>
<dbReference type="EMBL" id="AJ874689">
    <property type="protein sequence ID" value="CAI44685.1"/>
    <property type="molecule type" value="mRNA"/>
</dbReference>
<dbReference type="EMBL" id="AJ874690">
    <property type="protein sequence ID" value="CAI44686.1"/>
    <property type="molecule type" value="Genomic_DNA"/>
</dbReference>
<dbReference type="RefSeq" id="NP_001266335.1">
    <property type="nucleotide sequence ID" value="NM_001279406.1"/>
</dbReference>
<dbReference type="SMR" id="Q7Z0Q2"/>
<dbReference type="EnsemblMetazoa" id="NM_001279406.1">
    <property type="protein sequence ID" value="NP_001266335.1"/>
    <property type="gene ID" value="LOC101448341"/>
</dbReference>
<dbReference type="GeneID" id="101448341"/>
<dbReference type="KEGG" id="ccat:101448341"/>
<dbReference type="OrthoDB" id="67317at2759"/>
<dbReference type="GO" id="GO:0016020">
    <property type="term" value="C:membrane"/>
    <property type="evidence" value="ECO:0007669"/>
    <property type="project" value="UniProtKB-SubCell"/>
</dbReference>
<dbReference type="GO" id="GO:0004521">
    <property type="term" value="F:RNA endonuclease activity"/>
    <property type="evidence" value="ECO:0000250"/>
    <property type="project" value="UniProtKB"/>
</dbReference>
<dbReference type="InterPro" id="IPR026770">
    <property type="entry name" value="RNase_K"/>
</dbReference>
<dbReference type="PANTHER" id="PTHR31733">
    <property type="entry name" value="RIBONUCLEASE KAPPA"/>
    <property type="match status" value="1"/>
</dbReference>
<keyword id="KW-0255">Endonuclease</keyword>
<keyword id="KW-0378">Hydrolase</keyword>
<keyword id="KW-0472">Membrane</keyword>
<keyword id="KW-0540">Nuclease</keyword>
<keyword id="KW-0812">Transmembrane</keyword>
<keyword id="KW-1133">Transmembrane helix</keyword>
<comment type="function">
    <text evidence="2">Endoribonuclease which displays activity against poly(C) and poly(U) synthetic substrates, as well as rRNA.</text>
</comment>
<comment type="activity regulation">
    <text evidence="2">Inhibited by Zn(2+) and Hg(2+), while it is unaffected by Ca(2+).</text>
</comment>
<comment type="subcellular location">
    <subcellularLocation>
        <location evidence="3">Membrane</location>
        <topology evidence="3">Multi-pass membrane protein</topology>
    </subcellularLocation>
</comment>
<comment type="similarity">
    <text evidence="3">Belongs to the RNase K family.</text>
</comment>
<accession>Q7Z0Q2</accession>
<accession>A6PVB5</accession>
<name>RNKB_CERCA</name>
<reference key="1">
    <citation type="journal article" date="2003" name="Nucleic Acids Res.">
        <title>Cc RNase: the Ceratitis capitata ortholog of a novel highly conserved protein family in metazoans.</title>
        <authorList>
            <person name="Rampias T.N."/>
            <person name="Sideris D.C."/>
            <person name="Fragoulis E.G."/>
        </authorList>
    </citation>
    <scope>NUCLEOTIDE SEQUENCE [GENOMIC DNA / MRNA]</scope>
    <scope>FUNCTION</scope>
    <scope>ENZYME ACTIVITY</scope>
    <scope>ACTIVITY REGULATION</scope>
</reference>
<evidence type="ECO:0000255" key="1"/>
<evidence type="ECO:0000269" key="2">
    <source>
    </source>
</evidence>
<evidence type="ECO:0000305" key="3"/>
<sequence>MKICGPKLSLCGLIISVWGIIQLVLMGLFFYINSVALIEDLPIDEEFNSVEEFYTAATSAYNQNAYNCWIAACIYVLTLLLSAQQFYVNSRATAN</sequence>
<organism>
    <name type="scientific">Ceratitis capitata</name>
    <name type="common">Mediterranean fruit fly</name>
    <name type="synonym">Tephritis capitata</name>
    <dbReference type="NCBI Taxonomy" id="7213"/>
    <lineage>
        <taxon>Eukaryota</taxon>
        <taxon>Metazoa</taxon>
        <taxon>Ecdysozoa</taxon>
        <taxon>Arthropoda</taxon>
        <taxon>Hexapoda</taxon>
        <taxon>Insecta</taxon>
        <taxon>Pterygota</taxon>
        <taxon>Neoptera</taxon>
        <taxon>Endopterygota</taxon>
        <taxon>Diptera</taxon>
        <taxon>Brachycera</taxon>
        <taxon>Muscomorpha</taxon>
        <taxon>Tephritoidea</taxon>
        <taxon>Tephritidae</taxon>
        <taxon>Ceratitis</taxon>
        <taxon>Ceratitis</taxon>
    </lineage>
</organism>
<proteinExistence type="inferred from homology"/>